<keyword id="KW-0028">Amino-acid biosynthesis</keyword>
<keyword id="KW-0963">Cytoplasm</keyword>
<keyword id="KW-0554">One-carbon metabolism</keyword>
<keyword id="KW-0663">Pyridoxal phosphate</keyword>
<keyword id="KW-0808">Transferase</keyword>
<gene>
    <name evidence="1" type="primary">glyA</name>
    <name type="ordered locus">Shewmr7_1160</name>
</gene>
<feature type="chain" id="PRO_1000006321" description="Serine hydroxymethyltransferase">
    <location>
        <begin position="1"/>
        <end position="417"/>
    </location>
</feature>
<feature type="binding site" evidence="1">
    <location>
        <position position="121"/>
    </location>
    <ligand>
        <name>(6S)-5,6,7,8-tetrahydrofolate</name>
        <dbReference type="ChEBI" id="CHEBI:57453"/>
    </ligand>
</feature>
<feature type="binding site" evidence="1">
    <location>
        <begin position="125"/>
        <end position="127"/>
    </location>
    <ligand>
        <name>(6S)-5,6,7,8-tetrahydrofolate</name>
        <dbReference type="ChEBI" id="CHEBI:57453"/>
    </ligand>
</feature>
<feature type="binding site" evidence="1">
    <location>
        <begin position="355"/>
        <end position="357"/>
    </location>
    <ligand>
        <name>(6S)-5,6,7,8-tetrahydrofolate</name>
        <dbReference type="ChEBI" id="CHEBI:57453"/>
    </ligand>
</feature>
<feature type="site" description="Plays an important role in substrate specificity" evidence="1">
    <location>
        <position position="228"/>
    </location>
</feature>
<feature type="modified residue" description="N6-(pyridoxal phosphate)lysine" evidence="1">
    <location>
        <position position="229"/>
    </location>
</feature>
<sequence>MLKKDMNIADYDPELFNAIQNETLRQEEHIELIASENYTSPRVMQAQGSQLTNKYAEGYPGKRYYGGCEYVDVVETLAIERAKQLFGATYANVQPHSGSQANSAVYMALLKPGDTVLGMNLAHGGHLTHGSPVNFSGRLYNIIPYGIDESGKIDYDEMERLAVEHKPKMMIGGFSAYSGIVDWARMREIADKIGAYLFVDMAHVAGLIAAGVYPNPVPHAHVVTSTTHKTLAGPRGGIILSAADDEELYKKLNSAVFPGGQGGPLMHVIAGKAVAFKEALEPEFKAYQQQVVKNAKAMVEVFLERGYKIVSGGTDNHLMLVDLIGRDLTGKEADAALGSANITVNKNSVPNDPRSPFVTSGVRIGTPAITRRGFKEAEAKELTGWICDILDDAHNPAVIERVKGQVLALCARFPVYG</sequence>
<dbReference type="EC" id="2.1.2.1" evidence="1"/>
<dbReference type="EMBL" id="CP000444">
    <property type="protein sequence ID" value="ABI42159.1"/>
    <property type="molecule type" value="Genomic_DNA"/>
</dbReference>
<dbReference type="SMR" id="Q0HXJ6"/>
<dbReference type="KEGG" id="shm:Shewmr7_1160"/>
<dbReference type="HOGENOM" id="CLU_022477_2_1_6"/>
<dbReference type="UniPathway" id="UPA00193"/>
<dbReference type="UniPathway" id="UPA00288">
    <property type="reaction ID" value="UER01023"/>
</dbReference>
<dbReference type="GO" id="GO:0005829">
    <property type="term" value="C:cytosol"/>
    <property type="evidence" value="ECO:0007669"/>
    <property type="project" value="TreeGrafter"/>
</dbReference>
<dbReference type="GO" id="GO:0004372">
    <property type="term" value="F:glycine hydroxymethyltransferase activity"/>
    <property type="evidence" value="ECO:0007669"/>
    <property type="project" value="UniProtKB-UniRule"/>
</dbReference>
<dbReference type="GO" id="GO:0030170">
    <property type="term" value="F:pyridoxal phosphate binding"/>
    <property type="evidence" value="ECO:0007669"/>
    <property type="project" value="UniProtKB-UniRule"/>
</dbReference>
<dbReference type="GO" id="GO:0019264">
    <property type="term" value="P:glycine biosynthetic process from serine"/>
    <property type="evidence" value="ECO:0007669"/>
    <property type="project" value="UniProtKB-UniRule"/>
</dbReference>
<dbReference type="GO" id="GO:0035999">
    <property type="term" value="P:tetrahydrofolate interconversion"/>
    <property type="evidence" value="ECO:0007669"/>
    <property type="project" value="UniProtKB-UniRule"/>
</dbReference>
<dbReference type="CDD" id="cd00378">
    <property type="entry name" value="SHMT"/>
    <property type="match status" value="1"/>
</dbReference>
<dbReference type="FunFam" id="3.40.640.10:FF:000001">
    <property type="entry name" value="Serine hydroxymethyltransferase"/>
    <property type="match status" value="1"/>
</dbReference>
<dbReference type="FunFam" id="3.90.1150.10:FF:000003">
    <property type="entry name" value="Serine hydroxymethyltransferase"/>
    <property type="match status" value="1"/>
</dbReference>
<dbReference type="Gene3D" id="3.90.1150.10">
    <property type="entry name" value="Aspartate Aminotransferase, domain 1"/>
    <property type="match status" value="1"/>
</dbReference>
<dbReference type="Gene3D" id="3.40.640.10">
    <property type="entry name" value="Type I PLP-dependent aspartate aminotransferase-like (Major domain)"/>
    <property type="match status" value="1"/>
</dbReference>
<dbReference type="HAMAP" id="MF_00051">
    <property type="entry name" value="SHMT"/>
    <property type="match status" value="1"/>
</dbReference>
<dbReference type="InterPro" id="IPR015424">
    <property type="entry name" value="PyrdxlP-dep_Trfase"/>
</dbReference>
<dbReference type="InterPro" id="IPR015421">
    <property type="entry name" value="PyrdxlP-dep_Trfase_major"/>
</dbReference>
<dbReference type="InterPro" id="IPR015422">
    <property type="entry name" value="PyrdxlP-dep_Trfase_small"/>
</dbReference>
<dbReference type="InterPro" id="IPR001085">
    <property type="entry name" value="Ser_HO-MeTrfase"/>
</dbReference>
<dbReference type="InterPro" id="IPR049943">
    <property type="entry name" value="Ser_HO-MeTrfase-like"/>
</dbReference>
<dbReference type="InterPro" id="IPR019798">
    <property type="entry name" value="Ser_HO-MeTrfase_PLP_BS"/>
</dbReference>
<dbReference type="InterPro" id="IPR039429">
    <property type="entry name" value="SHMT-like_dom"/>
</dbReference>
<dbReference type="NCBIfam" id="NF000586">
    <property type="entry name" value="PRK00011.1"/>
    <property type="match status" value="1"/>
</dbReference>
<dbReference type="PANTHER" id="PTHR11680">
    <property type="entry name" value="SERINE HYDROXYMETHYLTRANSFERASE"/>
    <property type="match status" value="1"/>
</dbReference>
<dbReference type="PANTHER" id="PTHR11680:SF50">
    <property type="entry name" value="SERINE HYDROXYMETHYLTRANSFERASE"/>
    <property type="match status" value="1"/>
</dbReference>
<dbReference type="Pfam" id="PF00464">
    <property type="entry name" value="SHMT"/>
    <property type="match status" value="1"/>
</dbReference>
<dbReference type="PIRSF" id="PIRSF000412">
    <property type="entry name" value="SHMT"/>
    <property type="match status" value="1"/>
</dbReference>
<dbReference type="SUPFAM" id="SSF53383">
    <property type="entry name" value="PLP-dependent transferases"/>
    <property type="match status" value="1"/>
</dbReference>
<dbReference type="PROSITE" id="PS00096">
    <property type="entry name" value="SHMT"/>
    <property type="match status" value="1"/>
</dbReference>
<proteinExistence type="inferred from homology"/>
<name>GLYA_SHESR</name>
<reference key="1">
    <citation type="submission" date="2006-08" db="EMBL/GenBank/DDBJ databases">
        <title>Complete sequence of chromosome 1 of Shewanella sp. MR-7.</title>
        <authorList>
            <person name="Copeland A."/>
            <person name="Lucas S."/>
            <person name="Lapidus A."/>
            <person name="Barry K."/>
            <person name="Detter J.C."/>
            <person name="Glavina del Rio T."/>
            <person name="Hammon N."/>
            <person name="Israni S."/>
            <person name="Dalin E."/>
            <person name="Tice H."/>
            <person name="Pitluck S."/>
            <person name="Kiss H."/>
            <person name="Brettin T."/>
            <person name="Bruce D."/>
            <person name="Han C."/>
            <person name="Tapia R."/>
            <person name="Gilna P."/>
            <person name="Schmutz J."/>
            <person name="Larimer F."/>
            <person name="Land M."/>
            <person name="Hauser L."/>
            <person name="Kyrpides N."/>
            <person name="Mikhailova N."/>
            <person name="Nealson K."/>
            <person name="Konstantinidis K."/>
            <person name="Klappenbach J."/>
            <person name="Tiedje J."/>
            <person name="Richardson P."/>
        </authorList>
    </citation>
    <scope>NUCLEOTIDE SEQUENCE [LARGE SCALE GENOMIC DNA]</scope>
    <source>
        <strain>MR-7</strain>
    </source>
</reference>
<protein>
    <recommendedName>
        <fullName evidence="1">Serine hydroxymethyltransferase</fullName>
        <shortName evidence="1">SHMT</shortName>
        <shortName evidence="1">Serine methylase</shortName>
        <ecNumber evidence="1">2.1.2.1</ecNumber>
    </recommendedName>
</protein>
<organism>
    <name type="scientific">Shewanella sp. (strain MR-7)</name>
    <dbReference type="NCBI Taxonomy" id="60481"/>
    <lineage>
        <taxon>Bacteria</taxon>
        <taxon>Pseudomonadati</taxon>
        <taxon>Pseudomonadota</taxon>
        <taxon>Gammaproteobacteria</taxon>
        <taxon>Alteromonadales</taxon>
        <taxon>Shewanellaceae</taxon>
        <taxon>Shewanella</taxon>
    </lineage>
</organism>
<evidence type="ECO:0000255" key="1">
    <source>
        <dbReference type="HAMAP-Rule" id="MF_00051"/>
    </source>
</evidence>
<comment type="function">
    <text evidence="1">Catalyzes the reversible interconversion of serine and glycine with tetrahydrofolate (THF) serving as the one-carbon carrier. This reaction serves as the major source of one-carbon groups required for the biosynthesis of purines, thymidylate, methionine, and other important biomolecules. Also exhibits THF-independent aldolase activity toward beta-hydroxyamino acids, producing glycine and aldehydes, via a retro-aldol mechanism.</text>
</comment>
<comment type="catalytic activity">
    <reaction evidence="1">
        <text>(6R)-5,10-methylene-5,6,7,8-tetrahydrofolate + glycine + H2O = (6S)-5,6,7,8-tetrahydrofolate + L-serine</text>
        <dbReference type="Rhea" id="RHEA:15481"/>
        <dbReference type="ChEBI" id="CHEBI:15377"/>
        <dbReference type="ChEBI" id="CHEBI:15636"/>
        <dbReference type="ChEBI" id="CHEBI:33384"/>
        <dbReference type="ChEBI" id="CHEBI:57305"/>
        <dbReference type="ChEBI" id="CHEBI:57453"/>
        <dbReference type="EC" id="2.1.2.1"/>
    </reaction>
</comment>
<comment type="cofactor">
    <cofactor evidence="1">
        <name>pyridoxal 5'-phosphate</name>
        <dbReference type="ChEBI" id="CHEBI:597326"/>
    </cofactor>
</comment>
<comment type="pathway">
    <text evidence="1">One-carbon metabolism; tetrahydrofolate interconversion.</text>
</comment>
<comment type="pathway">
    <text evidence="1">Amino-acid biosynthesis; glycine biosynthesis; glycine from L-serine: step 1/1.</text>
</comment>
<comment type="subunit">
    <text evidence="1">Homodimer.</text>
</comment>
<comment type="subcellular location">
    <subcellularLocation>
        <location evidence="1">Cytoplasm</location>
    </subcellularLocation>
</comment>
<comment type="similarity">
    <text evidence="1">Belongs to the SHMT family.</text>
</comment>
<accession>Q0HXJ6</accession>